<sequence length="1442" mass="161442">MTVFRQENVDDYYDTGEELGSGQFAVVKKCREKSTGLQYAAKFIKKRRTKSSRRGVSREDIEREVSILKEIRHPNVITLHEVYENKTDVILILELVAGGELFDFLAEKESLTEEEATEFLKQILSGVYYLHSLQIAHFDLKPENIMLLDRNVPKPRIKIIDFGLAHKIDFGNEFKNIFGTPEFVAPEIVNYEPLGLEADMWSIGVITYILLSGASPFLGDTKQETLANVSAVNYDFEEEFFRNTSTLAKDFIRRLLVKDPKKRMTIQDSLQHPWIKPKDTQQALSRKASAVNMEKFKKFAARKKWKQSVRLISLCQRLSRSFLSRSNMSVARSDDTLDEEDSFVMKAIIHAINDDNVPGLQHLLGSLSSYDVNQPNKHGTPPLLIAAGCGNIQMLQLLIKRGSRIDVQDKGGSNAIYWASRHGHVDTLKFLNENKCPLDVKDKSGETALHVAARYGHADVVQLLCSFGSNPDFQDKEEETPLHCAAWHGYYSVAKALCEVGCNVNIKNREGETPLLTASARGYHDIVECLAEHGADLNASDKDGHIALHLAVRRCQMEVIKTLLGHGSFVDFQDRHGNTPLHVACKDGSAPIVVALCEASCNLDISNKYGRTPLHLAANNGILDVVRYLCLMGANVEALTSDGKTAEDLAKAEQHEHVAGLLARLRKDTHRGLFIQQLRPTQNLQPRIKLKLFGHSGSGKSTLVESLKCGLLRSFFRRRRPRLSSTNSTRFPPSPLAAKPTVSVSINNLYPGCENVSVRSRSMMFEPGLTKGMLEVFVAPSHHLHCSTDDQSTKAIDIQNAYLNGVGDFSVWEFSGNPVYFCCYDYFAANDPTSIHIIVFSLEEPYEIQLNQVIFWLSFLKSLVPVEEPIAFGGKLKNPLRVVLVATHADIMNIPRPAGGEFGYDKDTSLLKEIRNRFGNDLHVSNKLFVLDAGASGSKDIKVLRNHLQEIRSQIVSGCSPMTHLCEKIISTLPSWRKLNGPNQLMSLQQFVYDVQDQLNPLASEDDLRRIAQQLHSTGEINIMQSETVQDVLLLDPRWLCTNVLGKLLSVETPRALHHYRGRYTMEDIQRLVPDSDVEELLQILDAMDICARDLSSGTMVDIPALIKTDSLQRSWADEEDEVMVYGGVRIVPVEHLTPFPCGIFHKVQVNLCRWIHQQSAEGDADIRLWVSGCRIANRGAELLVLLVNHGQGIEVQVRGLETEKIKCCLLLDSVCSTIETVMATTLPGLLTVKHYLSPQQLREHHEPVMVYQPRDFFRAQTLKESSLTNTMGGYKESFSSITCFGCHDVYSQASLGMDIHASDLSLLTRRKLSRLLDPPDPMGKDWCLLAMNLGLPDMVAKHNVNNRASRDFLPSPVHALLQEWTSYPESTVGILISKLRELGRRDAADFLLKASSVFKINLDGNGQEAYASSCNSGTSYNSISSVVSRRDSHAWTPLYDL</sequence>
<comment type="function">
    <text evidence="1 7 10 11 12">Calcium/calmodulin-dependent serine/threonine kinase involved in multiple cellular signaling pathways that trigger cell survival, apoptosis, and autophagy. Regulates both type I apoptotic and type II autophagic cell deaths signal, depending on the cellular setting. The former is caspase-dependent, while the latter is caspase-independent and is characterized by the accumulation of autophagic vesicles. Phosphorylates PIN1 resulting in inhibition of its catalytic activity, nuclear localization, and cellular function. Phosphorylates TPM1, enhancing stress fiber formation in endothelial cells. Phosphorylates STX1A and significantly decreases its binding to STXBP1. Phosphorylates PRKD1 and regulates JNK signaling by binding and activating PRKD1 under oxidative stress. Phosphorylates BECN1, reducing its interaction with BCL2 and BCL2L1 and promoting the induction of autophagy. Phosphorylates TSC2, disrupting the TSC1-TSC2 complex and stimulating mTORC1 activity in a growth factor-dependent pathway. Phosphorylates RPS6, MYL9 and DAPK3 (By similarity). Acts as a signaling amplifier of NMDA receptors at extrasynaptic sites for mediating brain damage in stroke. Cerebral ischemia recruits DAPK1 into the NMDA receptor complex and it phosphorylates GRINB at Ser-1303 inducing injurious Ca(2+) influx through NMDA receptor channels, resulting in an irreversible neuronal death. Required together with DAPK3 for phosphorylation of RPL13A upon interferon-gamma activation which is causing RPL13A involvement in transcript-selective translation inhibition.</text>
</comment>
<comment type="catalytic activity">
    <reaction>
        <text>L-seryl-[protein] + ATP = O-phospho-L-seryl-[protein] + ADP + H(+)</text>
        <dbReference type="Rhea" id="RHEA:17989"/>
        <dbReference type="Rhea" id="RHEA-COMP:9863"/>
        <dbReference type="Rhea" id="RHEA-COMP:11604"/>
        <dbReference type="ChEBI" id="CHEBI:15378"/>
        <dbReference type="ChEBI" id="CHEBI:29999"/>
        <dbReference type="ChEBI" id="CHEBI:30616"/>
        <dbReference type="ChEBI" id="CHEBI:83421"/>
        <dbReference type="ChEBI" id="CHEBI:456216"/>
        <dbReference type="EC" id="2.7.11.1"/>
    </reaction>
</comment>
<comment type="catalytic activity">
    <reaction>
        <text>L-threonyl-[protein] + ATP = O-phospho-L-threonyl-[protein] + ADP + H(+)</text>
        <dbReference type="Rhea" id="RHEA:46608"/>
        <dbReference type="Rhea" id="RHEA-COMP:11060"/>
        <dbReference type="Rhea" id="RHEA-COMP:11605"/>
        <dbReference type="ChEBI" id="CHEBI:15378"/>
        <dbReference type="ChEBI" id="CHEBI:30013"/>
        <dbReference type="ChEBI" id="CHEBI:30616"/>
        <dbReference type="ChEBI" id="CHEBI:61977"/>
        <dbReference type="ChEBI" id="CHEBI:456216"/>
        <dbReference type="EC" id="2.7.11.1"/>
    </reaction>
</comment>
<comment type="cofactor">
    <cofactor evidence="7">
        <name>Mg(2+)</name>
        <dbReference type="ChEBI" id="CHEBI:18420"/>
    </cofactor>
</comment>
<comment type="activity regulation">
    <text evidence="9 10">Activated by Ca(2+)/calmodulin. Regulated by a locking mechanism, involving autophosphorylation at Ser-308 and calmodulin binding. In the inactive state, Ser-308 is phosphorylated. Activation involves its dephosphorylation and a release-of-autoinhibition mechanism where binding of calmodulin induces a conformational change that relieves the steric block of the active site by the autoinhibitory domain. Activity is modulated by UNC5B and NTN1. UNC5B activates it by inhibiting the phosphorylation at Ser-308, whereas NTN1 inhibits UNC5B-mediated activation of DAPK1. Endoplasmic-stress activates by causing Ser-308 dephosphorylation.</text>
</comment>
<comment type="subunit">
    <text evidence="2 9 11">Interacts with KLHL20 (By similarity). Interacts (via death domain) with MAPK1 and MAPK3 (By similarity). Interacts with MAP1B (via N-terminus) (By similarity). Interacts with PRKD1 in an oxidative stress-regulated manner (By similarity). Interacts with PIN1, PDCD6, BECN1, TSC2 and STX1A (By similarity). Interacts (via kinase domain) with DAPK3 (via kinase domain) (By similarity). Interacts with GRINB (PubMed:20141836). Interacts (via death domain) with UNC5B (via death domain) (PubMed:15729359). Interacts with UNC5C (via death domain) (By similarity).</text>
</comment>
<comment type="interaction">
    <interactant intactId="EBI-2584874">
        <id>Q80YE7</id>
    </interactant>
    <interactant intactId="EBI-400125">
        <id>Q01097</id>
        <label>Grin2b</label>
    </interactant>
    <organismsDiffer>false</organismsDiffer>
    <experiments>8</experiments>
</comment>
<comment type="alternative products">
    <event type="alternative splicing"/>
    <isoform>
        <id>Q80YE7-1</id>
        <name evidence="17">1</name>
        <name>Beta</name>
        <sequence type="displayed"/>
    </isoform>
    <isoform>
        <id>Q80YE7-2</id>
        <name evidence="17">2</name>
        <name>Alpha</name>
        <sequence type="described" ref="VSP_050629"/>
    </isoform>
</comment>
<comment type="tissue specificity">
    <text evidence="7">High levels in bladder, uterus, vas deferens, lung, liver and kidney.</text>
</comment>
<comment type="domain">
    <text>The autoinhibitory domain sterically blocks the substrate peptide-binding site by making both hydrophobic and electrostatic contacts with the kinase core.</text>
</comment>
<comment type="PTM">
    <text evidence="1">Ubiquitinated by the BCR(KLHL20) E3 ubiquitin ligase complex, leading to its degradation by the proteasome.</text>
</comment>
<comment type="PTM">
    <text evidence="9 11">In response to mitogenic stimulation (PMA or EGF), phosphorylated at Ser-289; phosphorylation suppresses DAPK1 pro-apoptotic function. Autophosphorylation at Ser-308 inhibits its catalytic activity. Phosphorylation at Ser-734 by MAPK1 increases its catalytic activity and promotes cytoplasmic retention of MAPK1. Endoplasmic-stress can cause dephosphorylation at Ser-308.</text>
</comment>
<comment type="disruption phenotype">
    <text evidence="11">Mice are protected against cerebral ischemic neuronal death.</text>
</comment>
<comment type="similarity">
    <text evidence="17">Belongs to the protein kinase superfamily. CAMK Ser/Thr protein kinase family. DAP kinase subfamily.</text>
</comment>
<comment type="sequence caution" evidence="17">
    <conflict type="erroneous initiation">
        <sequence resource="EMBL-CDS" id="AAH21490"/>
    </conflict>
</comment>
<protein>
    <recommendedName>
        <fullName>Death-associated protein kinase 1</fullName>
        <shortName>DAP kinase 1</shortName>
        <ecNumber>2.7.11.1</ecNumber>
    </recommendedName>
</protein>
<proteinExistence type="evidence at protein level"/>
<name>DAPK1_MOUSE</name>
<accession>Q80YE7</accession>
<accession>Q80YE6</accession>
<accession>Q8R341</accession>
<accession>Q8VDN6</accession>
<accession>Q9CSD4</accession>
<accession>Q9JJP7</accession>
<reference evidence="17" key="1">
    <citation type="journal article" date="2001" name="J. Biol. Chem.">
        <title>Identification of a new form of death-associated protein kinase that promotes cell survival.</title>
        <authorList>
            <person name="Jin Y."/>
            <person name="Blue E.K."/>
            <person name="Dixon S."/>
            <person name="Hou L."/>
            <person name="Wysolmerski R.B."/>
            <person name="Gallagher P.J."/>
        </authorList>
    </citation>
    <scope>NUCLEOTIDE SEQUENCE [MRNA] (ISOFORMS 1 AND 2)</scope>
    <scope>FUNCTION</scope>
    <scope>TISSUE SPECIFICITY</scope>
    <source>
        <tissue evidence="19">Embryo</tissue>
    </source>
</reference>
<reference evidence="17" key="2">
    <citation type="submission" date="1996-04" db="EMBL/GenBank/DDBJ databases">
        <authorList>
            <person name="Kimchi A."/>
        </authorList>
    </citation>
    <scope>NUCLEOTIDE SEQUENCE [MRNA] (ISOFORM 2)</scope>
    <source>
        <tissue evidence="20">Brain</tissue>
    </source>
</reference>
<reference evidence="17" key="3">
    <citation type="journal article" date="2004" name="Genome Res.">
        <title>The status, quality, and expansion of the NIH full-length cDNA project: the Mammalian Gene Collection (MGC).</title>
        <authorList>
            <consortium name="The MGC Project Team"/>
        </authorList>
    </citation>
    <scope>NUCLEOTIDE SEQUENCE [LARGE SCALE MRNA] (ISOFORM 2)</scope>
    <source>
        <strain evidence="18">C57BL/6J</strain>
        <tissue evidence="18">Brain</tissue>
        <tissue evidence="8">Mammary gland</tissue>
    </source>
</reference>
<reference key="4">
    <citation type="journal article" date="2005" name="Science">
        <title>The transcriptional landscape of the mammalian genome.</title>
        <authorList>
            <person name="Carninci P."/>
            <person name="Kasukawa T."/>
            <person name="Katayama S."/>
            <person name="Gough J."/>
            <person name="Frith M.C."/>
            <person name="Maeda N."/>
            <person name="Oyama R."/>
            <person name="Ravasi T."/>
            <person name="Lenhard B."/>
            <person name="Wells C."/>
            <person name="Kodzius R."/>
            <person name="Shimokawa K."/>
            <person name="Bajic V.B."/>
            <person name="Brenner S.E."/>
            <person name="Batalov S."/>
            <person name="Forrest A.R."/>
            <person name="Zavolan M."/>
            <person name="Davis M.J."/>
            <person name="Wilming L.G."/>
            <person name="Aidinis V."/>
            <person name="Allen J.E."/>
            <person name="Ambesi-Impiombato A."/>
            <person name="Apweiler R."/>
            <person name="Aturaliya R.N."/>
            <person name="Bailey T.L."/>
            <person name="Bansal M."/>
            <person name="Baxter L."/>
            <person name="Beisel K.W."/>
            <person name="Bersano T."/>
            <person name="Bono H."/>
            <person name="Chalk A.M."/>
            <person name="Chiu K.P."/>
            <person name="Choudhary V."/>
            <person name="Christoffels A."/>
            <person name="Clutterbuck D.R."/>
            <person name="Crowe M.L."/>
            <person name="Dalla E."/>
            <person name="Dalrymple B.P."/>
            <person name="de Bono B."/>
            <person name="Della Gatta G."/>
            <person name="di Bernardo D."/>
            <person name="Down T."/>
            <person name="Engstrom P."/>
            <person name="Fagiolini M."/>
            <person name="Faulkner G."/>
            <person name="Fletcher C.F."/>
            <person name="Fukushima T."/>
            <person name="Furuno M."/>
            <person name="Futaki S."/>
            <person name="Gariboldi M."/>
            <person name="Georgii-Hemming P."/>
            <person name="Gingeras T.R."/>
            <person name="Gojobori T."/>
            <person name="Green R.E."/>
            <person name="Gustincich S."/>
            <person name="Harbers M."/>
            <person name="Hayashi Y."/>
            <person name="Hensch T.K."/>
            <person name="Hirokawa N."/>
            <person name="Hill D."/>
            <person name="Huminiecki L."/>
            <person name="Iacono M."/>
            <person name="Ikeo K."/>
            <person name="Iwama A."/>
            <person name="Ishikawa T."/>
            <person name="Jakt M."/>
            <person name="Kanapin A."/>
            <person name="Katoh M."/>
            <person name="Kawasawa Y."/>
            <person name="Kelso J."/>
            <person name="Kitamura H."/>
            <person name="Kitano H."/>
            <person name="Kollias G."/>
            <person name="Krishnan S.P."/>
            <person name="Kruger A."/>
            <person name="Kummerfeld S.K."/>
            <person name="Kurochkin I.V."/>
            <person name="Lareau L.F."/>
            <person name="Lazarevic D."/>
            <person name="Lipovich L."/>
            <person name="Liu J."/>
            <person name="Liuni S."/>
            <person name="McWilliam S."/>
            <person name="Madan Babu M."/>
            <person name="Madera M."/>
            <person name="Marchionni L."/>
            <person name="Matsuda H."/>
            <person name="Matsuzawa S."/>
            <person name="Miki H."/>
            <person name="Mignone F."/>
            <person name="Miyake S."/>
            <person name="Morris K."/>
            <person name="Mottagui-Tabar S."/>
            <person name="Mulder N."/>
            <person name="Nakano N."/>
            <person name="Nakauchi H."/>
            <person name="Ng P."/>
            <person name="Nilsson R."/>
            <person name="Nishiguchi S."/>
            <person name="Nishikawa S."/>
            <person name="Nori F."/>
            <person name="Ohara O."/>
            <person name="Okazaki Y."/>
            <person name="Orlando V."/>
            <person name="Pang K.C."/>
            <person name="Pavan W.J."/>
            <person name="Pavesi G."/>
            <person name="Pesole G."/>
            <person name="Petrovsky N."/>
            <person name="Piazza S."/>
            <person name="Reed J."/>
            <person name="Reid J.F."/>
            <person name="Ring B.Z."/>
            <person name="Ringwald M."/>
            <person name="Rost B."/>
            <person name="Ruan Y."/>
            <person name="Salzberg S.L."/>
            <person name="Sandelin A."/>
            <person name="Schneider C."/>
            <person name="Schoenbach C."/>
            <person name="Sekiguchi K."/>
            <person name="Semple C.A."/>
            <person name="Seno S."/>
            <person name="Sessa L."/>
            <person name="Sheng Y."/>
            <person name="Shibata Y."/>
            <person name="Shimada H."/>
            <person name="Shimada K."/>
            <person name="Silva D."/>
            <person name="Sinclair B."/>
            <person name="Sperling S."/>
            <person name="Stupka E."/>
            <person name="Sugiura K."/>
            <person name="Sultana R."/>
            <person name="Takenaka Y."/>
            <person name="Taki K."/>
            <person name="Tammoja K."/>
            <person name="Tan S.L."/>
            <person name="Tang S."/>
            <person name="Taylor M.S."/>
            <person name="Tegner J."/>
            <person name="Teichmann S.A."/>
            <person name="Ueda H.R."/>
            <person name="van Nimwegen E."/>
            <person name="Verardo R."/>
            <person name="Wei C.L."/>
            <person name="Yagi K."/>
            <person name="Yamanishi H."/>
            <person name="Zabarovsky E."/>
            <person name="Zhu S."/>
            <person name="Zimmer A."/>
            <person name="Hide W."/>
            <person name="Bult C."/>
            <person name="Grimmond S.M."/>
            <person name="Teasdale R.D."/>
            <person name="Liu E.T."/>
            <person name="Brusic V."/>
            <person name="Quackenbush J."/>
            <person name="Wahlestedt C."/>
            <person name="Mattick J.S."/>
            <person name="Hume D.A."/>
            <person name="Kai C."/>
            <person name="Sasaki D."/>
            <person name="Tomaru Y."/>
            <person name="Fukuda S."/>
            <person name="Kanamori-Katayama M."/>
            <person name="Suzuki M."/>
            <person name="Aoki J."/>
            <person name="Arakawa T."/>
            <person name="Iida J."/>
            <person name="Imamura K."/>
            <person name="Itoh M."/>
            <person name="Kato T."/>
            <person name="Kawaji H."/>
            <person name="Kawagashira N."/>
            <person name="Kawashima T."/>
            <person name="Kojima M."/>
            <person name="Kondo S."/>
            <person name="Konno H."/>
            <person name="Nakano K."/>
            <person name="Ninomiya N."/>
            <person name="Nishio T."/>
            <person name="Okada M."/>
            <person name="Plessy C."/>
            <person name="Shibata K."/>
            <person name="Shiraki T."/>
            <person name="Suzuki S."/>
            <person name="Tagami M."/>
            <person name="Waki K."/>
            <person name="Watahiki A."/>
            <person name="Okamura-Oho Y."/>
            <person name="Suzuki H."/>
            <person name="Kawai J."/>
            <person name="Hayashizaki Y."/>
        </authorList>
    </citation>
    <scope>NUCLEOTIDE SEQUENCE [LARGE SCALE MRNA] OF 1203-1442 (ISOFORM 2)</scope>
    <source>
        <strain>C57BL/6J</strain>
        <tissue>Embryo</tissue>
    </source>
</reference>
<reference key="5">
    <citation type="journal article" date="2005" name="EMBO J.">
        <title>The dependence receptor UNC5H2 mediates apoptosis through DAP-kinase.</title>
        <authorList>
            <person name="Llambi F."/>
            <person name="Lourenco F.C."/>
            <person name="Gozuacik D."/>
            <person name="Guix C."/>
            <person name="Pays L."/>
            <person name="Del Rio G."/>
            <person name="Kimchi A."/>
            <person name="Mehlen P."/>
        </authorList>
    </citation>
    <scope>PHOSPHORYLATION AT SER-308</scope>
    <scope>ACTIVITY REGULATION</scope>
    <scope>INTERACTION WITH UNC5B</scope>
</reference>
<reference key="6">
    <citation type="journal article" date="2007" name="Proc. Natl. Acad. Sci. U.S.A.">
        <title>Large-scale phosphorylation analysis of mouse liver.</title>
        <authorList>
            <person name="Villen J."/>
            <person name="Beausoleil S.A."/>
            <person name="Gerber S.A."/>
            <person name="Gygi S.P."/>
        </authorList>
    </citation>
    <scope>PHOSPHORYLATION [LARGE SCALE ANALYSIS] AT SER-333</scope>
    <scope>IDENTIFICATION BY MASS SPECTROMETRY [LARGE SCALE ANALYSIS]</scope>
    <source>
        <tissue>Liver</tissue>
    </source>
</reference>
<reference key="7">
    <citation type="journal article" date="2008" name="Cell Death Differ.">
        <title>DAP-kinase is a mediator of endoplasmic reticulum stress-induced caspase activation and autophagic cell death.</title>
        <authorList>
            <person name="Gozuacik D."/>
            <person name="Bialik S."/>
            <person name="Raveh T."/>
            <person name="Mitou G."/>
            <person name="Shohat G."/>
            <person name="Sabanay H."/>
            <person name="Mizushima N."/>
            <person name="Yoshimori T."/>
            <person name="Kimchi A."/>
        </authorList>
    </citation>
    <scope>FUNCTION</scope>
    <scope>DEPHOSPHORYLATION AT SER-308</scope>
    <scope>ACTIVITY REGULATION</scope>
</reference>
<reference key="8">
    <citation type="journal article" date="2010" name="Cell">
        <title>DAPK1 interaction with NMDA receptor NR2B subunits mediates brain damage in stroke.</title>
        <authorList>
            <person name="Tu W."/>
            <person name="Xu X."/>
            <person name="Peng L."/>
            <person name="Zhong X."/>
            <person name="Zhang W."/>
            <person name="Soundarapandian M.M."/>
            <person name="Balel C."/>
            <person name="Wang M."/>
            <person name="Jia N."/>
            <person name="Zhang W."/>
            <person name="Lew F."/>
            <person name="Chan S.L."/>
            <person name="Chen Y."/>
            <person name="Lu Y."/>
        </authorList>
    </citation>
    <scope>FUNCTION</scope>
    <scope>IDENTIFICATION BY MASS SPECTROMETRY</scope>
    <scope>INTERACTION WITH GRIN2B</scope>
    <scope>PHOSPHORYLATION AT SER-308</scope>
    <scope>DISRUPTION PHENOTYPE</scope>
</reference>
<reference key="9">
    <citation type="journal article" date="2010" name="Cell">
        <title>A tissue-specific atlas of mouse protein phosphorylation and expression.</title>
        <authorList>
            <person name="Huttlin E.L."/>
            <person name="Jedrychowski M.P."/>
            <person name="Elias J.E."/>
            <person name="Goswami T."/>
            <person name="Rad R."/>
            <person name="Beausoleil S.A."/>
            <person name="Villen J."/>
            <person name="Haas W."/>
            <person name="Sowa M.E."/>
            <person name="Gygi S.P."/>
        </authorList>
    </citation>
    <scope>PHOSPHORYLATION [LARGE SCALE ANALYSIS] AT SER-333; SER-1115 AND SER-1433</scope>
    <scope>IDENTIFICATION BY MASS SPECTROMETRY [LARGE SCALE ANALYSIS]</scope>
    <source>
        <tissue>Brain</tissue>
        <tissue>Kidney</tissue>
        <tissue>Lung</tissue>
    </source>
</reference>
<reference key="10">
    <citation type="journal article" date="2012" name="Mol. Cell. Biol.">
        <title>Heterotrimeric GAIT complex drives transcript-selective translation inhibition in murine macrophages.</title>
        <authorList>
            <person name="Arif A."/>
            <person name="Chatterjee P."/>
            <person name="Moodt R.A."/>
            <person name="Fox P.L."/>
        </authorList>
    </citation>
    <scope>FUNCTION</scope>
</reference>
<organism evidence="19">
    <name type="scientific">Mus musculus</name>
    <name type="common">Mouse</name>
    <dbReference type="NCBI Taxonomy" id="10090"/>
    <lineage>
        <taxon>Eukaryota</taxon>
        <taxon>Metazoa</taxon>
        <taxon>Chordata</taxon>
        <taxon>Craniata</taxon>
        <taxon>Vertebrata</taxon>
        <taxon>Euteleostomi</taxon>
        <taxon>Mammalia</taxon>
        <taxon>Eutheria</taxon>
        <taxon>Euarchontoglires</taxon>
        <taxon>Glires</taxon>
        <taxon>Rodentia</taxon>
        <taxon>Myomorpha</taxon>
        <taxon>Muroidea</taxon>
        <taxon>Muridae</taxon>
        <taxon>Murinae</taxon>
        <taxon>Mus</taxon>
        <taxon>Mus</taxon>
    </lineage>
</organism>
<keyword id="KW-0002">3D-structure</keyword>
<keyword id="KW-0025">Alternative splicing</keyword>
<keyword id="KW-0040">ANK repeat</keyword>
<keyword id="KW-0053">Apoptosis</keyword>
<keyword id="KW-0067">ATP-binding</keyword>
<keyword id="KW-0112">Calmodulin-binding</keyword>
<keyword id="KW-0342">GTP-binding</keyword>
<keyword id="KW-0418">Kinase</keyword>
<keyword id="KW-0547">Nucleotide-binding</keyword>
<keyword id="KW-0597">Phosphoprotein</keyword>
<keyword id="KW-1185">Reference proteome</keyword>
<keyword id="KW-0677">Repeat</keyword>
<keyword id="KW-0723">Serine/threonine-protein kinase</keyword>
<keyword id="KW-0808">Transferase</keyword>
<keyword id="KW-0810">Translation regulation</keyword>
<keyword id="KW-0832">Ubl conjugation</keyword>
<gene>
    <name type="primary">Dapk1</name>
</gene>
<feature type="chain" id="PRO_0000085911" description="Death-associated protein kinase 1">
    <location>
        <begin position="1"/>
        <end position="1442"/>
    </location>
</feature>
<feature type="domain" description="Protein kinase" evidence="4">
    <location>
        <begin position="13"/>
        <end position="275"/>
    </location>
</feature>
<feature type="repeat" description="ANK 1" evidence="17">
    <location>
        <begin position="378"/>
        <end position="407"/>
    </location>
</feature>
<feature type="repeat" description="ANK 2" evidence="17">
    <location>
        <begin position="411"/>
        <end position="440"/>
    </location>
</feature>
<feature type="repeat" description="ANK 3" evidence="17">
    <location>
        <begin position="444"/>
        <end position="473"/>
    </location>
</feature>
<feature type="repeat" description="ANK 4" evidence="17">
    <location>
        <begin position="477"/>
        <end position="506"/>
    </location>
</feature>
<feature type="repeat" description="ANK 5" evidence="17">
    <location>
        <begin position="510"/>
        <end position="539"/>
    </location>
</feature>
<feature type="repeat" description="ANK 6" evidence="17">
    <location>
        <begin position="543"/>
        <end position="572"/>
    </location>
</feature>
<feature type="repeat" description="ANK 7" evidence="17">
    <location>
        <begin position="576"/>
        <end position="605"/>
    </location>
</feature>
<feature type="repeat" description="ANK 8" evidence="17">
    <location>
        <begin position="609"/>
        <end position="638"/>
    </location>
</feature>
<feature type="domain" description="Roc" evidence="5">
    <location>
        <begin position="681"/>
        <end position="955"/>
    </location>
</feature>
<feature type="repeat" description="ANK 9" evidence="17">
    <location>
        <begin position="875"/>
        <end position="904"/>
    </location>
</feature>
<feature type="repeat" description="ANK 10" evidence="17">
    <location>
        <begin position="1164"/>
        <end position="1196"/>
    </location>
</feature>
<feature type="domain" description="Death" evidence="3">
    <location>
        <begin position="1312"/>
        <end position="1396"/>
    </location>
</feature>
<feature type="region of interest" description="Calmodulin-binding" evidence="1">
    <location>
        <begin position="267"/>
        <end position="334"/>
    </location>
</feature>
<feature type="region of interest" description="Autoinhibitory domain" evidence="1">
    <location>
        <begin position="292"/>
        <end position="301"/>
    </location>
</feature>
<feature type="active site" description="Proton acceptor" evidence="4 6">
    <location>
        <position position="139"/>
    </location>
</feature>
<feature type="binding site" evidence="4">
    <location>
        <begin position="19"/>
        <end position="27"/>
    </location>
    <ligand>
        <name>ATP</name>
        <dbReference type="ChEBI" id="CHEBI:30616"/>
    </ligand>
</feature>
<feature type="binding site" evidence="4">
    <location>
        <position position="42"/>
    </location>
    <ligand>
        <name>ATP</name>
        <dbReference type="ChEBI" id="CHEBI:30616"/>
    </ligand>
</feature>
<feature type="modified residue" description="Phosphoserine; by RPS6KA1 and RPS6KA3" evidence="2">
    <location>
        <position position="289"/>
    </location>
</feature>
<feature type="modified residue" description="Phosphoserine; by autocatalysis" evidence="9 11">
    <location>
        <position position="308"/>
    </location>
</feature>
<feature type="modified residue" description="Phosphoserine" evidence="2">
    <location>
        <position position="319"/>
    </location>
</feature>
<feature type="modified residue" description="Phosphoserine" evidence="21 22">
    <location>
        <position position="333"/>
    </location>
</feature>
<feature type="modified residue" description="Phosphoserine; by MAPK1" evidence="2">
    <location>
        <position position="734"/>
    </location>
</feature>
<feature type="modified residue" description="Phosphoserine" evidence="22">
    <location>
        <position position="1115"/>
    </location>
</feature>
<feature type="modified residue" description="Phosphoserine" evidence="22">
    <location>
        <position position="1433"/>
    </location>
</feature>
<feature type="splice variant" id="VSP_050629" description="In isoform 2." evidence="13 14 15 16">
    <location>
        <begin position="1431"/>
        <end position="1442"/>
    </location>
</feature>
<feature type="sequence conflict" description="In Ref. 2; CAA65762." evidence="17" ref="2">
    <original>D</original>
    <variation>N</variation>
    <location>
        <position position="354"/>
    </location>
</feature>
<feature type="sequence conflict" description="In Ref. 3; AAH57317/AAH60161." evidence="17" ref="3">
    <original>K</original>
    <variation>Q</variation>
    <location>
        <position position="441"/>
    </location>
</feature>
<feature type="sequence conflict" description="In Ref. 2; CAA65762." evidence="17" ref="2">
    <original>V</original>
    <variation>A</variation>
    <location>
        <position position="461"/>
    </location>
</feature>
<feature type="sequence conflict" description="In Ref. 2; CAA65762." evidence="17" ref="2">
    <original>S</original>
    <variation>P</variation>
    <location>
        <position position="960"/>
    </location>
</feature>
<feature type="sequence conflict" description="In Ref. 2; CAA65762." evidence="17" ref="2">
    <original>N</original>
    <variation>T</variation>
    <location>
        <position position="1000"/>
    </location>
</feature>
<feature type="sequence conflict" description="In Ref. 2; CAA65762." evidence="17" ref="2">
    <original>RWLCT</original>
    <variation>PMALH</variation>
    <location>
        <begin position="1038"/>
        <end position="1042"/>
    </location>
</feature>
<feature type="sequence conflict" description="In Ref. 1; AAO91934/AAO91935." evidence="17" ref="1">
    <original>A</original>
    <variation>V</variation>
    <location>
        <position position="1105"/>
    </location>
</feature>
<dbReference type="EC" id="2.7.11.1"/>
<dbReference type="EMBL" id="AY245540">
    <property type="protein sequence ID" value="AAO91934.2"/>
    <property type="molecule type" value="mRNA"/>
</dbReference>
<dbReference type="EMBL" id="AY245541">
    <property type="protein sequence ID" value="AAO91935.1"/>
    <property type="molecule type" value="mRNA"/>
</dbReference>
<dbReference type="EMBL" id="X97048">
    <property type="protein sequence ID" value="CAA65762.1"/>
    <property type="molecule type" value="mRNA"/>
</dbReference>
<dbReference type="EMBL" id="BC021490">
    <property type="protein sequence ID" value="AAH21490.1"/>
    <property type="status" value="ALT_INIT"/>
    <property type="molecule type" value="mRNA"/>
</dbReference>
<dbReference type="EMBL" id="BC026671">
    <property type="protein sequence ID" value="AAH26671.1"/>
    <property type="molecule type" value="mRNA"/>
</dbReference>
<dbReference type="EMBL" id="BC057317">
    <property type="protein sequence ID" value="AAH57317.1"/>
    <property type="molecule type" value="mRNA"/>
</dbReference>
<dbReference type="EMBL" id="BC060161">
    <property type="protein sequence ID" value="AAH60161.1"/>
    <property type="molecule type" value="mRNA"/>
</dbReference>
<dbReference type="EMBL" id="AK013153">
    <property type="protein sequence ID" value="BAB28681.1"/>
    <property type="molecule type" value="mRNA"/>
</dbReference>
<dbReference type="CCDS" id="CCDS26581.1">
    <molecule id="Q80YE7-2"/>
</dbReference>
<dbReference type="CCDS" id="CCDS88466.1">
    <molecule id="Q80YE7-1"/>
</dbReference>
<dbReference type="RefSeq" id="NP_001272846.1">
    <molecule id="Q80YE7-1"/>
    <property type="nucleotide sequence ID" value="NM_001285917.1"/>
</dbReference>
<dbReference type="RefSeq" id="NP_083929.2">
    <molecule id="Q80YE7-2"/>
    <property type="nucleotide sequence ID" value="NM_029653.3"/>
</dbReference>
<dbReference type="RefSeq" id="NP_598823.1">
    <molecule id="Q80YE7-2"/>
    <property type="nucleotide sequence ID" value="NM_134062.2"/>
</dbReference>
<dbReference type="RefSeq" id="XP_006517433.1">
    <molecule id="Q80YE7-1"/>
    <property type="nucleotide sequence ID" value="XM_006517370.5"/>
</dbReference>
<dbReference type="RefSeq" id="XP_030103260.1">
    <molecule id="Q80YE7-1"/>
    <property type="nucleotide sequence ID" value="XM_030247400.2"/>
</dbReference>
<dbReference type="RefSeq" id="XP_036014052.1">
    <molecule id="Q80YE7-2"/>
    <property type="nucleotide sequence ID" value="XM_036158159.1"/>
</dbReference>
<dbReference type="PDB" id="8ODZ">
    <property type="method" value="EM"/>
    <property type="resolution" value="3.60 A"/>
    <property type="chains" value="C=301-319"/>
</dbReference>
<dbReference type="PDB" id="8PB1">
    <property type="method" value="EM"/>
    <property type="resolution" value="3.50 A"/>
    <property type="chains" value="C=301-319"/>
</dbReference>
<dbReference type="PDBsum" id="8ODZ"/>
<dbReference type="PDBsum" id="8PB1"/>
<dbReference type="SMR" id="Q80YE7"/>
<dbReference type="BioGRID" id="213581">
    <property type="interactions" value="16"/>
</dbReference>
<dbReference type="ComplexPortal" id="CPX-106">
    <property type="entry name" value="DAPK1 - calmodulin complex"/>
</dbReference>
<dbReference type="CORUM" id="Q80YE7"/>
<dbReference type="FunCoup" id="Q80YE7">
    <property type="interactions" value="859"/>
</dbReference>
<dbReference type="IntAct" id="Q80YE7">
    <property type="interactions" value="6"/>
</dbReference>
<dbReference type="MINT" id="Q80YE7"/>
<dbReference type="STRING" id="10090.ENSMUSP00000076666"/>
<dbReference type="GlyGen" id="Q80YE7">
    <property type="glycosylation" value="2 sites, 1 O-linked glycan (2 sites)"/>
</dbReference>
<dbReference type="iPTMnet" id="Q80YE7"/>
<dbReference type="PhosphoSitePlus" id="Q80YE7"/>
<dbReference type="jPOST" id="Q80YE7"/>
<dbReference type="PaxDb" id="10090-ENSMUSP00000076666"/>
<dbReference type="PeptideAtlas" id="Q80YE7"/>
<dbReference type="ProteomicsDB" id="279165">
    <molecule id="Q80YE7-1"/>
</dbReference>
<dbReference type="ProteomicsDB" id="279166">
    <molecule id="Q80YE7-2"/>
</dbReference>
<dbReference type="Pumba" id="Q80YE7"/>
<dbReference type="Antibodypedia" id="6771">
    <property type="antibodies" value="415 antibodies from 38 providers"/>
</dbReference>
<dbReference type="DNASU" id="69635"/>
<dbReference type="Ensembl" id="ENSMUST00000044083.9">
    <molecule id="Q80YE7-2"/>
    <property type="protein sequence ID" value="ENSMUSP00000040825.8"/>
    <property type="gene ID" value="ENSMUSG00000021559.15"/>
</dbReference>
<dbReference type="Ensembl" id="ENSMUST00000077453.13">
    <molecule id="Q80YE7-2"/>
    <property type="protein sequence ID" value="ENSMUSP00000076666.6"/>
    <property type="gene ID" value="ENSMUSG00000021559.15"/>
</dbReference>
<dbReference type="Ensembl" id="ENSMUST00000226059.2">
    <molecule id="Q80YE7-1"/>
    <property type="protein sequence ID" value="ENSMUSP00000153607.2"/>
    <property type="gene ID" value="ENSMUSG00000021559.15"/>
</dbReference>
<dbReference type="GeneID" id="69635"/>
<dbReference type="KEGG" id="mmu:69635"/>
<dbReference type="UCSC" id="uc007qvm.2">
    <molecule id="Q80YE7-1"/>
    <property type="organism name" value="mouse"/>
</dbReference>
<dbReference type="AGR" id="MGI:1916885"/>
<dbReference type="CTD" id="1612"/>
<dbReference type="MGI" id="MGI:1916885">
    <property type="gene designation" value="Dapk1"/>
</dbReference>
<dbReference type="VEuPathDB" id="HostDB:ENSMUSG00000021559"/>
<dbReference type="eggNOG" id="KOG0032">
    <property type="taxonomic scope" value="Eukaryota"/>
</dbReference>
<dbReference type="GeneTree" id="ENSGT00940000153424"/>
<dbReference type="HOGENOM" id="CLU_002849_2_0_1"/>
<dbReference type="InParanoid" id="Q80YE7"/>
<dbReference type="OMA" id="EPYHMAY"/>
<dbReference type="OrthoDB" id="9306077at2759"/>
<dbReference type="PhylomeDB" id="Q80YE7"/>
<dbReference type="TreeFam" id="TF314166"/>
<dbReference type="BioGRID-ORCS" id="69635">
    <property type="hits" value="1 hit in 81 CRISPR screens"/>
</dbReference>
<dbReference type="CD-CODE" id="CE726F99">
    <property type="entry name" value="Postsynaptic density"/>
</dbReference>
<dbReference type="ChiTaRS" id="Dapk1">
    <property type="organism name" value="mouse"/>
</dbReference>
<dbReference type="PRO" id="PR:Q80YE7"/>
<dbReference type="Proteomes" id="UP000000589">
    <property type="component" value="Chromosome 13"/>
</dbReference>
<dbReference type="RNAct" id="Q80YE7">
    <property type="molecule type" value="protein"/>
</dbReference>
<dbReference type="Bgee" id="ENSMUSG00000021559">
    <property type="expression patterns" value="Expressed in saccule of membranous labyrinth and 237 other cell types or tissues"/>
</dbReference>
<dbReference type="ExpressionAtlas" id="Q80YE7">
    <property type="expression patterns" value="baseline and differential"/>
</dbReference>
<dbReference type="GO" id="GO:0015629">
    <property type="term" value="C:actin cytoskeleton"/>
    <property type="evidence" value="ECO:0007669"/>
    <property type="project" value="Ensembl"/>
</dbReference>
<dbReference type="GO" id="GO:0005737">
    <property type="term" value="C:cytoplasm"/>
    <property type="evidence" value="ECO:0000314"/>
    <property type="project" value="MGI"/>
</dbReference>
<dbReference type="GO" id="GO:0005829">
    <property type="term" value="C:cytosol"/>
    <property type="evidence" value="ECO:0000304"/>
    <property type="project" value="Reactome"/>
</dbReference>
<dbReference type="GO" id="GO:1990722">
    <property type="term" value="C:DAPK1-calmodulin complex"/>
    <property type="evidence" value="ECO:0000266"/>
    <property type="project" value="ComplexPortal"/>
</dbReference>
<dbReference type="GO" id="GO:0098978">
    <property type="term" value="C:glutamatergic synapse"/>
    <property type="evidence" value="ECO:0000314"/>
    <property type="project" value="SynGO"/>
</dbReference>
<dbReference type="GO" id="GO:0005886">
    <property type="term" value="C:plasma membrane"/>
    <property type="evidence" value="ECO:0007669"/>
    <property type="project" value="Ensembl"/>
</dbReference>
<dbReference type="GO" id="GO:0014069">
    <property type="term" value="C:postsynaptic density"/>
    <property type="evidence" value="ECO:0000314"/>
    <property type="project" value="SynGO"/>
</dbReference>
<dbReference type="GO" id="GO:0005524">
    <property type="term" value="F:ATP binding"/>
    <property type="evidence" value="ECO:0000314"/>
    <property type="project" value="UniProtKB"/>
</dbReference>
<dbReference type="GO" id="GO:0004683">
    <property type="term" value="F:calcium/calmodulin-dependent protein kinase activity"/>
    <property type="evidence" value="ECO:0007669"/>
    <property type="project" value="Ensembl"/>
</dbReference>
<dbReference type="GO" id="GO:0005516">
    <property type="term" value="F:calmodulin binding"/>
    <property type="evidence" value="ECO:0000314"/>
    <property type="project" value="UniProtKB"/>
</dbReference>
<dbReference type="GO" id="GO:0005525">
    <property type="term" value="F:GTP binding"/>
    <property type="evidence" value="ECO:0007669"/>
    <property type="project" value="UniProtKB-KW"/>
</dbReference>
<dbReference type="GO" id="GO:0042802">
    <property type="term" value="F:identical protein binding"/>
    <property type="evidence" value="ECO:0007669"/>
    <property type="project" value="Ensembl"/>
</dbReference>
<dbReference type="GO" id="GO:0004672">
    <property type="term" value="F:protein kinase activity"/>
    <property type="evidence" value="ECO:0000314"/>
    <property type="project" value="MGI"/>
</dbReference>
<dbReference type="GO" id="GO:0106310">
    <property type="term" value="F:protein serine kinase activity"/>
    <property type="evidence" value="ECO:0007669"/>
    <property type="project" value="RHEA"/>
</dbReference>
<dbReference type="GO" id="GO:0017075">
    <property type="term" value="F:syntaxin-1 binding"/>
    <property type="evidence" value="ECO:0007669"/>
    <property type="project" value="Ensembl"/>
</dbReference>
<dbReference type="GO" id="GO:0006915">
    <property type="term" value="P:apoptotic process"/>
    <property type="evidence" value="ECO:0000266"/>
    <property type="project" value="MGI"/>
</dbReference>
<dbReference type="GO" id="GO:0097190">
    <property type="term" value="P:apoptotic signaling pathway"/>
    <property type="evidence" value="ECO:0000304"/>
    <property type="project" value="ProtInc"/>
</dbReference>
<dbReference type="GO" id="GO:0071447">
    <property type="term" value="P:cellular response to hydroperoxide"/>
    <property type="evidence" value="ECO:0007669"/>
    <property type="project" value="Ensembl"/>
</dbReference>
<dbReference type="GO" id="GO:0071346">
    <property type="term" value="P:cellular response to type II interferon"/>
    <property type="evidence" value="ECO:0000315"/>
    <property type="project" value="UniProtKB"/>
</dbReference>
<dbReference type="GO" id="GO:0002357">
    <property type="term" value="P:defense response to tumor cell"/>
    <property type="evidence" value="ECO:0007669"/>
    <property type="project" value="Ensembl"/>
</dbReference>
<dbReference type="GO" id="GO:0008625">
    <property type="term" value="P:extrinsic apoptotic signaling pathway via death domain receptors"/>
    <property type="evidence" value="ECO:0000315"/>
    <property type="project" value="MGI"/>
</dbReference>
<dbReference type="GO" id="GO:0035556">
    <property type="term" value="P:intracellular signal transduction"/>
    <property type="evidence" value="ECO:0000314"/>
    <property type="project" value="UniProtKB"/>
</dbReference>
<dbReference type="GO" id="GO:0043066">
    <property type="term" value="P:negative regulation of apoptotic process"/>
    <property type="evidence" value="ECO:0000315"/>
    <property type="project" value="UniProtKB"/>
</dbReference>
<dbReference type="GO" id="GO:1902042">
    <property type="term" value="P:negative regulation of extrinsic apoptotic signaling pathway via death domain receptors"/>
    <property type="evidence" value="ECO:0000314"/>
    <property type="project" value="MGI"/>
</dbReference>
<dbReference type="GO" id="GO:0017148">
    <property type="term" value="P:negative regulation of translation"/>
    <property type="evidence" value="ECO:0007669"/>
    <property type="project" value="Ensembl"/>
</dbReference>
<dbReference type="GO" id="GO:0043065">
    <property type="term" value="P:positive regulation of apoptotic process"/>
    <property type="evidence" value="ECO:0000266"/>
    <property type="project" value="ComplexPortal"/>
</dbReference>
<dbReference type="GO" id="GO:1904094">
    <property type="term" value="P:positive regulation of autophagic cell death"/>
    <property type="evidence" value="ECO:0000266"/>
    <property type="project" value="ComplexPortal"/>
</dbReference>
<dbReference type="GO" id="GO:0010508">
    <property type="term" value="P:positive regulation of autophagy"/>
    <property type="evidence" value="ECO:0007669"/>
    <property type="project" value="Ensembl"/>
</dbReference>
<dbReference type="GO" id="GO:0006468">
    <property type="term" value="P:protein phosphorylation"/>
    <property type="evidence" value="ECO:0000314"/>
    <property type="project" value="UniProtKB"/>
</dbReference>
<dbReference type="GO" id="GO:2000310">
    <property type="term" value="P:regulation of NMDA receptor activity"/>
    <property type="evidence" value="ECO:0000315"/>
    <property type="project" value="UniProtKB"/>
</dbReference>
<dbReference type="GO" id="GO:0002834">
    <property type="term" value="P:regulation of response to tumor cell"/>
    <property type="evidence" value="ECO:0000266"/>
    <property type="project" value="ComplexPortal"/>
</dbReference>
<dbReference type="CDD" id="cd08782">
    <property type="entry name" value="Death_DAPK1"/>
    <property type="match status" value="1"/>
</dbReference>
<dbReference type="CDD" id="cd14194">
    <property type="entry name" value="STKc_DAPK1"/>
    <property type="match status" value="1"/>
</dbReference>
<dbReference type="FunFam" id="1.10.533.10:FF:000008">
    <property type="entry name" value="Death associated protein kinase 1"/>
    <property type="match status" value="1"/>
</dbReference>
<dbReference type="FunFam" id="1.25.40.20:FF:000056">
    <property type="entry name" value="Death associated protein kinase 1"/>
    <property type="match status" value="1"/>
</dbReference>
<dbReference type="FunFam" id="1.25.40.20:FF:000086">
    <property type="entry name" value="Death associated protein kinase 1"/>
    <property type="match status" value="1"/>
</dbReference>
<dbReference type="FunFam" id="3.30.200.20:FF:000110">
    <property type="entry name" value="Death-associated kinase 3, isoform CRA_a"/>
    <property type="match status" value="1"/>
</dbReference>
<dbReference type="FunFam" id="1.20.5.460:FF:000003">
    <property type="entry name" value="Death-associated protein kinase 1"/>
    <property type="match status" value="1"/>
</dbReference>
<dbReference type="FunFam" id="1.10.510.10:FF:000250">
    <property type="entry name" value="Death-associated protein kinase 3"/>
    <property type="match status" value="1"/>
</dbReference>
<dbReference type="Gene3D" id="1.25.40.20">
    <property type="entry name" value="Ankyrin repeat-containing domain"/>
    <property type="match status" value="3"/>
</dbReference>
<dbReference type="Gene3D" id="1.10.533.10">
    <property type="entry name" value="Death Domain, Fas"/>
    <property type="match status" value="1"/>
</dbReference>
<dbReference type="Gene3D" id="3.30.200.20">
    <property type="entry name" value="Phosphorylase Kinase, domain 1"/>
    <property type="match status" value="1"/>
</dbReference>
<dbReference type="Gene3D" id="1.20.5.460">
    <property type="entry name" value="Single helix bin"/>
    <property type="match status" value="1"/>
</dbReference>
<dbReference type="Gene3D" id="1.10.510.10">
    <property type="entry name" value="Transferase(Phosphotransferase) domain 1"/>
    <property type="match status" value="1"/>
</dbReference>
<dbReference type="InterPro" id="IPR002110">
    <property type="entry name" value="Ankyrin_rpt"/>
</dbReference>
<dbReference type="InterPro" id="IPR036770">
    <property type="entry name" value="Ankyrin_rpt-contain_sf"/>
</dbReference>
<dbReference type="InterPro" id="IPR020676">
    <property type="entry name" value="DAPK1_cat"/>
</dbReference>
<dbReference type="InterPro" id="IPR011029">
    <property type="entry name" value="DEATH-like_dom_sf"/>
</dbReference>
<dbReference type="InterPro" id="IPR000488">
    <property type="entry name" value="Death_dom"/>
</dbReference>
<dbReference type="InterPro" id="IPR011009">
    <property type="entry name" value="Kinase-like_dom_sf"/>
</dbReference>
<dbReference type="InterPro" id="IPR027417">
    <property type="entry name" value="P-loop_NTPase"/>
</dbReference>
<dbReference type="InterPro" id="IPR000719">
    <property type="entry name" value="Prot_kinase_dom"/>
</dbReference>
<dbReference type="InterPro" id="IPR017441">
    <property type="entry name" value="Protein_kinase_ATP_BS"/>
</dbReference>
<dbReference type="InterPro" id="IPR020859">
    <property type="entry name" value="ROC"/>
</dbReference>
<dbReference type="InterPro" id="IPR008271">
    <property type="entry name" value="Ser/Thr_kinase_AS"/>
</dbReference>
<dbReference type="PANTHER" id="PTHR24342:SF17">
    <property type="entry name" value="DEATH-ASSOCIATED PROTEIN KINASE 1"/>
    <property type="match status" value="1"/>
</dbReference>
<dbReference type="PANTHER" id="PTHR24342">
    <property type="entry name" value="SERINE/THREONINE-PROTEIN KINASE 17"/>
    <property type="match status" value="1"/>
</dbReference>
<dbReference type="Pfam" id="PF00023">
    <property type="entry name" value="Ank"/>
    <property type="match status" value="2"/>
</dbReference>
<dbReference type="Pfam" id="PF12796">
    <property type="entry name" value="Ank_2"/>
    <property type="match status" value="2"/>
</dbReference>
<dbReference type="Pfam" id="PF00531">
    <property type="entry name" value="Death"/>
    <property type="match status" value="1"/>
</dbReference>
<dbReference type="Pfam" id="PF00069">
    <property type="entry name" value="Pkinase"/>
    <property type="match status" value="1"/>
</dbReference>
<dbReference type="PRINTS" id="PR01415">
    <property type="entry name" value="ANKYRIN"/>
</dbReference>
<dbReference type="SMART" id="SM00248">
    <property type="entry name" value="ANK"/>
    <property type="match status" value="9"/>
</dbReference>
<dbReference type="SMART" id="SM00005">
    <property type="entry name" value="DEATH"/>
    <property type="match status" value="1"/>
</dbReference>
<dbReference type="SMART" id="SM00220">
    <property type="entry name" value="S_TKc"/>
    <property type="match status" value="1"/>
</dbReference>
<dbReference type="SUPFAM" id="SSF48403">
    <property type="entry name" value="Ankyrin repeat"/>
    <property type="match status" value="1"/>
</dbReference>
<dbReference type="SUPFAM" id="SSF47986">
    <property type="entry name" value="DEATH domain"/>
    <property type="match status" value="1"/>
</dbReference>
<dbReference type="SUPFAM" id="SSF52540">
    <property type="entry name" value="P-loop containing nucleoside triphosphate hydrolases"/>
    <property type="match status" value="1"/>
</dbReference>
<dbReference type="SUPFAM" id="SSF56112">
    <property type="entry name" value="Protein kinase-like (PK-like)"/>
    <property type="match status" value="1"/>
</dbReference>
<dbReference type="PROSITE" id="PS50297">
    <property type="entry name" value="ANK_REP_REGION"/>
    <property type="match status" value="1"/>
</dbReference>
<dbReference type="PROSITE" id="PS50088">
    <property type="entry name" value="ANK_REPEAT"/>
    <property type="match status" value="7"/>
</dbReference>
<dbReference type="PROSITE" id="PS50017">
    <property type="entry name" value="DEATH_DOMAIN"/>
    <property type="match status" value="1"/>
</dbReference>
<dbReference type="PROSITE" id="PS00107">
    <property type="entry name" value="PROTEIN_KINASE_ATP"/>
    <property type="match status" value="1"/>
</dbReference>
<dbReference type="PROSITE" id="PS50011">
    <property type="entry name" value="PROTEIN_KINASE_DOM"/>
    <property type="match status" value="1"/>
</dbReference>
<dbReference type="PROSITE" id="PS00108">
    <property type="entry name" value="PROTEIN_KINASE_ST"/>
    <property type="match status" value="1"/>
</dbReference>
<dbReference type="PROSITE" id="PS51424">
    <property type="entry name" value="ROC"/>
    <property type="match status" value="1"/>
</dbReference>
<evidence type="ECO:0000250" key="1"/>
<evidence type="ECO:0000250" key="2">
    <source>
        <dbReference type="UniProtKB" id="P53355"/>
    </source>
</evidence>
<evidence type="ECO:0000255" key="3">
    <source>
        <dbReference type="PROSITE-ProRule" id="PRU00064"/>
    </source>
</evidence>
<evidence type="ECO:0000255" key="4">
    <source>
        <dbReference type="PROSITE-ProRule" id="PRU00159"/>
    </source>
</evidence>
<evidence type="ECO:0000255" key="5">
    <source>
        <dbReference type="PROSITE-ProRule" id="PRU00758"/>
    </source>
</evidence>
<evidence type="ECO:0000255" key="6">
    <source>
        <dbReference type="PROSITE-ProRule" id="PRU10027"/>
    </source>
</evidence>
<evidence type="ECO:0000269" key="7">
    <source>
    </source>
</evidence>
<evidence type="ECO:0000269" key="8">
    <source>
    </source>
</evidence>
<evidence type="ECO:0000269" key="9">
    <source>
    </source>
</evidence>
<evidence type="ECO:0000269" key="10">
    <source>
    </source>
</evidence>
<evidence type="ECO:0000269" key="11">
    <source>
    </source>
</evidence>
<evidence type="ECO:0000269" key="12">
    <source>
    </source>
</evidence>
<evidence type="ECO:0000303" key="13">
    <source>
    </source>
</evidence>
<evidence type="ECO:0000303" key="14">
    <source>
    </source>
</evidence>
<evidence type="ECO:0000303" key="15">
    <source>
    </source>
</evidence>
<evidence type="ECO:0000303" key="16">
    <source ref="2"/>
</evidence>
<evidence type="ECO:0000305" key="17"/>
<evidence type="ECO:0000312" key="18">
    <source>
        <dbReference type="EMBL" id="AAH57317.1"/>
    </source>
</evidence>
<evidence type="ECO:0000312" key="19">
    <source>
        <dbReference type="EMBL" id="AAO91934.2"/>
    </source>
</evidence>
<evidence type="ECO:0000312" key="20">
    <source>
        <dbReference type="EMBL" id="CAA65762.1"/>
    </source>
</evidence>
<evidence type="ECO:0007744" key="21">
    <source>
    </source>
</evidence>
<evidence type="ECO:0007744" key="22">
    <source>
    </source>
</evidence>